<protein>
    <recommendedName>
        <fullName evidence="1">N-succinylglutamate 5-semialdehyde dehydrogenase</fullName>
        <ecNumber evidence="1">1.2.1.71</ecNumber>
    </recommendedName>
    <alternativeName>
        <fullName evidence="1">Succinylglutamic semialdehyde dehydrogenase</fullName>
        <shortName evidence="1">SGSD</shortName>
    </alternativeName>
</protein>
<comment type="function">
    <text evidence="1">Catalyzes the NAD-dependent reduction of succinylglutamate semialdehyde into succinylglutamate.</text>
</comment>
<comment type="catalytic activity">
    <reaction evidence="1">
        <text>N-succinyl-L-glutamate 5-semialdehyde + NAD(+) + H2O = N-succinyl-L-glutamate + NADH + 2 H(+)</text>
        <dbReference type="Rhea" id="RHEA:10812"/>
        <dbReference type="ChEBI" id="CHEBI:15377"/>
        <dbReference type="ChEBI" id="CHEBI:15378"/>
        <dbReference type="ChEBI" id="CHEBI:57540"/>
        <dbReference type="ChEBI" id="CHEBI:57945"/>
        <dbReference type="ChEBI" id="CHEBI:58520"/>
        <dbReference type="ChEBI" id="CHEBI:58763"/>
        <dbReference type="EC" id="1.2.1.71"/>
    </reaction>
</comment>
<comment type="pathway">
    <text evidence="1">Amino-acid degradation; L-arginine degradation via AST pathway; L-glutamate and succinate from L-arginine: step 4/5.</text>
</comment>
<comment type="similarity">
    <text evidence="1">Belongs to the aldehyde dehydrogenase family. AstD subfamily.</text>
</comment>
<gene>
    <name evidence="1" type="primary">astD</name>
    <name type="ordered locus">ESA_02155</name>
</gene>
<evidence type="ECO:0000255" key="1">
    <source>
        <dbReference type="HAMAP-Rule" id="MF_01174"/>
    </source>
</evidence>
<organism>
    <name type="scientific">Cronobacter sakazakii (strain ATCC BAA-894)</name>
    <name type="common">Enterobacter sakazakii</name>
    <dbReference type="NCBI Taxonomy" id="290339"/>
    <lineage>
        <taxon>Bacteria</taxon>
        <taxon>Pseudomonadati</taxon>
        <taxon>Pseudomonadota</taxon>
        <taxon>Gammaproteobacteria</taxon>
        <taxon>Enterobacterales</taxon>
        <taxon>Enterobacteriaceae</taxon>
        <taxon>Cronobacter</taxon>
    </lineage>
</organism>
<proteinExistence type="inferred from homology"/>
<accession>A7MNV8</accession>
<feature type="chain" id="PRO_1000065757" description="N-succinylglutamate 5-semialdehyde dehydrogenase">
    <location>
        <begin position="1"/>
        <end position="492"/>
    </location>
</feature>
<feature type="active site" evidence="1">
    <location>
        <position position="243"/>
    </location>
</feature>
<feature type="active site" evidence="1">
    <location>
        <position position="277"/>
    </location>
</feature>
<feature type="binding site" evidence="1">
    <location>
        <begin position="220"/>
        <end position="225"/>
    </location>
    <ligand>
        <name>NAD(+)</name>
        <dbReference type="ChEBI" id="CHEBI:57540"/>
    </ligand>
</feature>
<dbReference type="EC" id="1.2.1.71" evidence="1"/>
<dbReference type="EMBL" id="CP000783">
    <property type="protein sequence ID" value="ABU77404.1"/>
    <property type="molecule type" value="Genomic_DNA"/>
</dbReference>
<dbReference type="RefSeq" id="WP_012125019.1">
    <property type="nucleotide sequence ID" value="NC_009778.1"/>
</dbReference>
<dbReference type="SMR" id="A7MNV8"/>
<dbReference type="KEGG" id="esa:ESA_02155"/>
<dbReference type="PATRIC" id="fig|290339.8.peg.1926"/>
<dbReference type="HOGENOM" id="CLU_005391_1_0_6"/>
<dbReference type="UniPathway" id="UPA00185">
    <property type="reaction ID" value="UER00282"/>
</dbReference>
<dbReference type="Proteomes" id="UP000000260">
    <property type="component" value="Chromosome"/>
</dbReference>
<dbReference type="GO" id="GO:0043824">
    <property type="term" value="F:succinylglutamate-semialdehyde dehydrogenase activity"/>
    <property type="evidence" value="ECO:0007669"/>
    <property type="project" value="UniProtKB-EC"/>
</dbReference>
<dbReference type="GO" id="GO:0019544">
    <property type="term" value="P:arginine catabolic process to glutamate"/>
    <property type="evidence" value="ECO:0007669"/>
    <property type="project" value="UniProtKB-UniRule"/>
</dbReference>
<dbReference type="GO" id="GO:0019545">
    <property type="term" value="P:arginine catabolic process to succinate"/>
    <property type="evidence" value="ECO:0007669"/>
    <property type="project" value="UniProtKB-UniRule"/>
</dbReference>
<dbReference type="CDD" id="cd07095">
    <property type="entry name" value="ALDH_SGSD_AstD"/>
    <property type="match status" value="1"/>
</dbReference>
<dbReference type="FunFam" id="3.40.309.10:FF:000013">
    <property type="entry name" value="N-succinylglutamate 5-semialdehyde dehydrogenase"/>
    <property type="match status" value="1"/>
</dbReference>
<dbReference type="FunFam" id="3.40.605.10:FF:000010">
    <property type="entry name" value="N-succinylglutamate 5-semialdehyde dehydrogenase"/>
    <property type="match status" value="1"/>
</dbReference>
<dbReference type="Gene3D" id="3.40.605.10">
    <property type="entry name" value="Aldehyde Dehydrogenase, Chain A, domain 1"/>
    <property type="match status" value="1"/>
</dbReference>
<dbReference type="Gene3D" id="3.40.309.10">
    <property type="entry name" value="Aldehyde Dehydrogenase, Chain A, domain 2"/>
    <property type="match status" value="1"/>
</dbReference>
<dbReference type="HAMAP" id="MF_01174">
    <property type="entry name" value="Aldedh_AstD"/>
    <property type="match status" value="1"/>
</dbReference>
<dbReference type="InterPro" id="IPR016161">
    <property type="entry name" value="Ald_DH/histidinol_DH"/>
</dbReference>
<dbReference type="InterPro" id="IPR016163">
    <property type="entry name" value="Ald_DH_C"/>
</dbReference>
<dbReference type="InterPro" id="IPR016160">
    <property type="entry name" value="Ald_DH_CS_CYS"/>
</dbReference>
<dbReference type="InterPro" id="IPR029510">
    <property type="entry name" value="Ald_DH_CS_GLU"/>
</dbReference>
<dbReference type="InterPro" id="IPR016162">
    <property type="entry name" value="Ald_DH_N"/>
</dbReference>
<dbReference type="InterPro" id="IPR015590">
    <property type="entry name" value="Aldehyde_DH_dom"/>
</dbReference>
<dbReference type="InterPro" id="IPR017649">
    <property type="entry name" value="SuccinylGlu_semiald_DH_AstD"/>
</dbReference>
<dbReference type="NCBIfam" id="TIGR03240">
    <property type="entry name" value="arg_catab_astD"/>
    <property type="match status" value="1"/>
</dbReference>
<dbReference type="NCBIfam" id="NF006992">
    <property type="entry name" value="PRK09457.1"/>
    <property type="match status" value="1"/>
</dbReference>
<dbReference type="PANTHER" id="PTHR11699">
    <property type="entry name" value="ALDEHYDE DEHYDROGENASE-RELATED"/>
    <property type="match status" value="1"/>
</dbReference>
<dbReference type="Pfam" id="PF00171">
    <property type="entry name" value="Aldedh"/>
    <property type="match status" value="1"/>
</dbReference>
<dbReference type="SUPFAM" id="SSF53720">
    <property type="entry name" value="ALDH-like"/>
    <property type="match status" value="1"/>
</dbReference>
<dbReference type="PROSITE" id="PS00070">
    <property type="entry name" value="ALDEHYDE_DEHYDR_CYS"/>
    <property type="match status" value="1"/>
</dbReference>
<dbReference type="PROSITE" id="PS00687">
    <property type="entry name" value="ALDEHYDE_DEHYDR_GLU"/>
    <property type="match status" value="1"/>
</dbReference>
<keyword id="KW-0056">Arginine metabolism</keyword>
<keyword id="KW-0520">NAD</keyword>
<keyword id="KW-0560">Oxidoreductase</keyword>
<keyword id="KW-1185">Reference proteome</keyword>
<reference key="1">
    <citation type="journal article" date="2010" name="PLoS ONE">
        <title>Genome sequence of Cronobacter sakazakii BAA-894 and comparative genomic hybridization analysis with other Cronobacter species.</title>
        <authorList>
            <person name="Kucerova E."/>
            <person name="Clifton S.W."/>
            <person name="Xia X.Q."/>
            <person name="Long F."/>
            <person name="Porwollik S."/>
            <person name="Fulton L."/>
            <person name="Fronick C."/>
            <person name="Minx P."/>
            <person name="Kyung K."/>
            <person name="Warren W."/>
            <person name="Fulton R."/>
            <person name="Feng D."/>
            <person name="Wollam A."/>
            <person name="Shah N."/>
            <person name="Bhonagiri V."/>
            <person name="Nash W.E."/>
            <person name="Hallsworth-Pepin K."/>
            <person name="Wilson R.K."/>
            <person name="McClelland M."/>
            <person name="Forsythe S.J."/>
        </authorList>
    </citation>
    <scope>NUCLEOTIDE SEQUENCE [LARGE SCALE GENOMIC DNA]</scope>
    <source>
        <strain>ATCC BAA-894</strain>
    </source>
</reference>
<name>ASTD_CROS8</name>
<sequence>MSLWINGEWTTGQGEALEKRDPVGSGLLWQGHAADDAQVQAACAAARAAFPAWAKRPFADRQAIAEKFAALLEANKTELTRIIALETSKPRWEAATEVTAMINKVGISLKAYQTRTGEQHSPMPDGAATLRHRPHGVLAVFGPYNFPGHLPNGHIVPALLAGNTLVFKPSELTPHTGEAVMKLWEQAGLPAGVLNLVQGARATGQALSARPELDGLLFTGSAGTGYQLHRQLAGQPEKILALEMGGNNPLIVEDPDDIDGAVHLAIQSAFITAGQRCTCARRLLVKRGAAGDAFLARLVEIAGRLRPDRWDAEPQPFMGGLISAQAAERVLEAWQGHLSRGGKPLLTPALVQAGSSLLTPGIIELTGVRDVPDEEVFGPLLGVWRYDDFDEAITLANATRYGLSCGLISPVREKFDQLLLEARAGIVNWNKPLTGAASTAPFGGVGASGNHRPSAWYAADYCAWPMASLESPTFALPQTLNPGLDFSGKEQA</sequence>